<protein>
    <recommendedName>
        <fullName>Non-structural maintenance of chromosomes element 4 homolog A</fullName>
        <shortName>Non-SMC element 4 homolog A</shortName>
    </recommendedName>
</protein>
<organism>
    <name type="scientific">Bos taurus</name>
    <name type="common">Bovine</name>
    <dbReference type="NCBI Taxonomy" id="9913"/>
    <lineage>
        <taxon>Eukaryota</taxon>
        <taxon>Metazoa</taxon>
        <taxon>Chordata</taxon>
        <taxon>Craniata</taxon>
        <taxon>Vertebrata</taxon>
        <taxon>Euteleostomi</taxon>
        <taxon>Mammalia</taxon>
        <taxon>Eutheria</taxon>
        <taxon>Laurasiatheria</taxon>
        <taxon>Artiodactyla</taxon>
        <taxon>Ruminantia</taxon>
        <taxon>Pecora</taxon>
        <taxon>Bovidae</taxon>
        <taxon>Bovinae</taxon>
        <taxon>Bos</taxon>
    </lineage>
</organism>
<keyword id="KW-0158">Chromosome</keyword>
<keyword id="KW-0227">DNA damage</keyword>
<keyword id="KW-0233">DNA recombination</keyword>
<keyword id="KW-0234">DNA repair</keyword>
<keyword id="KW-0539">Nucleus</keyword>
<keyword id="KW-0597">Phosphoprotein</keyword>
<keyword id="KW-1185">Reference proteome</keyword>
<keyword id="KW-0779">Telomere</keyword>
<evidence type="ECO:0000250" key="1"/>
<evidence type="ECO:0000250" key="2">
    <source>
        <dbReference type="UniProtKB" id="Q9NXX6"/>
    </source>
</evidence>
<evidence type="ECO:0000256" key="3">
    <source>
        <dbReference type="SAM" id="MobiDB-lite"/>
    </source>
</evidence>
<evidence type="ECO:0000305" key="4"/>
<sequence>MSGDSSGRRPEGRGRGRDPHRDRTRSRSRSRSPLSPGSRRGAAPERREAPERPGLEDTEPSDSGDEMIDPASLEEETDPSLCRQIRHQYRALINSVQQNREDILNASDKLTEVLEEANTLFNGVSRAREAVLDAHFLVLASDLGKEKAKQLRSDLNSFDMLRYVETLLTHMGVNPLEAEELIRDEDSSDLEFIVYDSWKISGKTAENTFNKTHTFHFLLGSIQGECPVPKPRIERPRKVRMIEEQQAMPAQLKRMEESHQEATEKEVERILGLLQTYFQEDPDTPMSFFDFVVDPHSFPRTVENIFHVSFIIRDGFARIRLDRDRLPVIEPVNINEESGGNTQIRNQAIIALSYRDWEEIVRTFEISEPVITSSQSQQRLSA</sequence>
<reference key="1">
    <citation type="submission" date="2005-11" db="EMBL/GenBank/DDBJ databases">
        <authorList>
            <consortium name="NIH - Mammalian Gene Collection (MGC) project"/>
        </authorList>
    </citation>
    <scope>NUCLEOTIDE SEQUENCE [LARGE SCALE MRNA]</scope>
    <source>
        <strain>Crossbred X Angus</strain>
        <tissue>Liver</tissue>
    </source>
</reference>
<feature type="chain" id="PRO_0000289144" description="Non-structural maintenance of chromosomes element 4 homolog A">
    <location>
        <begin position="1"/>
        <end position="382"/>
    </location>
</feature>
<feature type="region of interest" description="Disordered" evidence="3">
    <location>
        <begin position="1"/>
        <end position="80"/>
    </location>
</feature>
<feature type="compositionally biased region" description="Basic and acidic residues" evidence="3">
    <location>
        <begin position="1"/>
        <end position="21"/>
    </location>
</feature>
<feature type="compositionally biased region" description="Low complexity" evidence="3">
    <location>
        <begin position="31"/>
        <end position="41"/>
    </location>
</feature>
<feature type="compositionally biased region" description="Basic and acidic residues" evidence="3">
    <location>
        <begin position="42"/>
        <end position="55"/>
    </location>
</feature>
<feature type="compositionally biased region" description="Acidic residues" evidence="3">
    <location>
        <begin position="56"/>
        <end position="78"/>
    </location>
</feature>
<feature type="modified residue" description="Phosphothreonine" evidence="2">
    <location>
        <position position="342"/>
    </location>
</feature>
<feature type="modified residue" description="Phosphoserine" evidence="2">
    <location>
        <position position="374"/>
    </location>
</feature>
<comment type="function">
    <text evidence="1">Component of the SMC5-SMC6 complex, a complex involved in repair of DNA double-strand breaks by homologous recombination. The complex may promote sister chromatid homologous recombination by recruiting the SMC1-SMC3 cohesin complex to double-strand breaks. The complex is required for telomere maintenance via recombination and mediates sumoylation of shelterin complex (telosome) components (By similarity).</text>
</comment>
<comment type="subunit">
    <text evidence="2">Component of the SMC5-SMC6 complex which consists at least of SMC5, SMC6, NSMCE2, NSMCE1, NSMCE4A or EID3 and NSMCE3. NSMCE1, NSMCE4A or EID3 and NSMCE3 probably form a subcomplex that bridges the head domains of the SMC5:SMC6 heterodimer. Interacts with NSMCE3.</text>
</comment>
<comment type="subcellular location">
    <subcellularLocation>
        <location evidence="1">Nucleus</location>
    </subcellularLocation>
    <subcellularLocation>
        <location evidence="1">Chromosome</location>
        <location evidence="1">Telomere</location>
    </subcellularLocation>
</comment>
<comment type="similarity">
    <text evidence="4">Belongs to the NSE4 family.</text>
</comment>
<proteinExistence type="evidence at transcript level"/>
<accession>Q2TBI1</accession>
<name>NSE4A_BOVIN</name>
<dbReference type="EMBL" id="BC110171">
    <property type="protein sequence ID" value="AAI10172.1"/>
    <property type="molecule type" value="mRNA"/>
</dbReference>
<dbReference type="RefSeq" id="NP_001033767.1">
    <property type="nucleotide sequence ID" value="NM_001038678.2"/>
</dbReference>
<dbReference type="SMR" id="Q2TBI1"/>
<dbReference type="FunCoup" id="Q2TBI1">
    <property type="interactions" value="3074"/>
</dbReference>
<dbReference type="STRING" id="9913.ENSBTAP00000025508"/>
<dbReference type="PaxDb" id="9913-ENSBTAP00000025508"/>
<dbReference type="Ensembl" id="ENSBTAT00000025508.4">
    <property type="protein sequence ID" value="ENSBTAP00000025508.2"/>
    <property type="gene ID" value="ENSBTAG00000019166.4"/>
</dbReference>
<dbReference type="GeneID" id="527312"/>
<dbReference type="KEGG" id="bta:527312"/>
<dbReference type="CTD" id="54780"/>
<dbReference type="VEuPathDB" id="HostDB:ENSBTAG00000019166"/>
<dbReference type="VGNC" id="VGNC:32282">
    <property type="gene designation" value="NSMCE4A"/>
</dbReference>
<dbReference type="eggNOG" id="KOG2866">
    <property type="taxonomic scope" value="Eukaryota"/>
</dbReference>
<dbReference type="GeneTree" id="ENSGT00390000011476"/>
<dbReference type="HOGENOM" id="CLU_041037_3_0_1"/>
<dbReference type="InParanoid" id="Q2TBI1"/>
<dbReference type="OMA" id="FMGINRT"/>
<dbReference type="OrthoDB" id="361242at2759"/>
<dbReference type="TreeFam" id="TF313999"/>
<dbReference type="Reactome" id="R-BTA-3108214">
    <property type="pathway name" value="SUMOylation of DNA damage response and repair proteins"/>
</dbReference>
<dbReference type="Proteomes" id="UP000009136">
    <property type="component" value="Chromosome 26"/>
</dbReference>
<dbReference type="Bgee" id="ENSBTAG00000019166">
    <property type="expression patterns" value="Expressed in oocyte and 106 other cell types or tissues"/>
</dbReference>
<dbReference type="GO" id="GO:0000781">
    <property type="term" value="C:chromosome, telomeric region"/>
    <property type="evidence" value="ECO:0007669"/>
    <property type="project" value="UniProtKB-SubCell"/>
</dbReference>
<dbReference type="GO" id="GO:0016604">
    <property type="term" value="C:nuclear body"/>
    <property type="evidence" value="ECO:0007669"/>
    <property type="project" value="Ensembl"/>
</dbReference>
<dbReference type="GO" id="GO:0005634">
    <property type="term" value="C:nucleus"/>
    <property type="evidence" value="ECO:0000318"/>
    <property type="project" value="GO_Central"/>
</dbReference>
<dbReference type="GO" id="GO:0030915">
    <property type="term" value="C:Smc5-Smc6 complex"/>
    <property type="evidence" value="ECO:0000250"/>
    <property type="project" value="UniProtKB"/>
</dbReference>
<dbReference type="GO" id="GO:0006974">
    <property type="term" value="P:DNA damage response"/>
    <property type="evidence" value="ECO:0000250"/>
    <property type="project" value="UniProtKB"/>
</dbReference>
<dbReference type="GO" id="GO:0006310">
    <property type="term" value="P:DNA recombination"/>
    <property type="evidence" value="ECO:0007669"/>
    <property type="project" value="UniProtKB-KW"/>
</dbReference>
<dbReference type="GO" id="GO:0006281">
    <property type="term" value="P:DNA repair"/>
    <property type="evidence" value="ECO:0000318"/>
    <property type="project" value="GO_Central"/>
</dbReference>
<dbReference type="InterPro" id="IPR027786">
    <property type="entry name" value="Nse4/EID"/>
</dbReference>
<dbReference type="InterPro" id="IPR014854">
    <property type="entry name" value="Nse4_C"/>
</dbReference>
<dbReference type="InterPro" id="IPR029225">
    <property type="entry name" value="Nse4_Nse3-bd"/>
</dbReference>
<dbReference type="PANTHER" id="PTHR16140">
    <property type="entry name" value="NON-STRUCTURAL MAINTENANCE OF CHROMOSOMES ELEMENT 4"/>
    <property type="match status" value="1"/>
</dbReference>
<dbReference type="PANTHER" id="PTHR16140:SF2">
    <property type="entry name" value="NON-STRUCTURAL MAINTENANCE OF CHROMOSOMES ELEMENT 4 HOMOLOG A"/>
    <property type="match status" value="1"/>
</dbReference>
<dbReference type="Pfam" id="PF15412">
    <property type="entry name" value="Nse4-Nse3_bdg"/>
    <property type="match status" value="1"/>
</dbReference>
<dbReference type="Pfam" id="PF08743">
    <property type="entry name" value="Nse4_C"/>
    <property type="match status" value="1"/>
</dbReference>
<gene>
    <name type="primary">NSMCE4A</name>
</gene>